<keyword id="KW-0274">FAD</keyword>
<keyword id="KW-0285">Flavoprotein</keyword>
<keyword id="KW-0325">Glycoprotein</keyword>
<keyword id="KW-0560">Oxidoreductase</keyword>
<keyword id="KW-1185">Reference proteome</keyword>
<keyword id="KW-0732">Signal</keyword>
<sequence>MVSLKACVVAYGFTLLPALVSGSPLVPRYFQKHLVSRCNISAITVQSELGPQLSNTSLIFGPDNVLFPNATERWNTLDTPDVQLVVQPAAESDISKIVKYCNDNSIEFLVRNRGHGTTTSLSAFSGIEINVELLQGITIQPDGETAIFQAGTYGAEVINTLWDQGYVTTTGSTACVGLTGPSLGGGHSRYEGLYGLVMDNIVHYNIVLANGTEIGVNETSHPDLMWALKGAGHNFAIVTSLEKKIYPGENWHQHTYTWTQDKLETVFEALNTFHKSYNGTTPPKMGVNYGAIIMNTSYSTTEAVMEWGFQYAGPGDEAEALLAPFNAIGAIAEDQFDASYPTIAGTTSETCGSAKRAISSAMTLDYNITTERALYDHFVAKVAEYPDLAATAYLWHEGYSTEGYQIIPEDSTAYPHREENHLMVFFTEVPEDSDLLEPALDWAKEAMDLWNGGQPDRLPSTYVNYAQGADYETLESVYGYESWRLERLRSLKAEYDPENRFRYFVPIISDEA</sequence>
<reference key="1">
    <citation type="journal article" date="2018" name="ACS Chem. Biol.">
        <title>Characterization of a prenyltransferase for iso-A82775C biosynthesis and generation of new congeners of chloropestolides.</title>
        <authorList>
            <person name="Pan Y."/>
            <person name="Liu L."/>
            <person name="Guan F."/>
            <person name="Li E."/>
            <person name="Jin J."/>
            <person name="Li J."/>
            <person name="Che Y."/>
            <person name="Liu G."/>
        </authorList>
    </citation>
    <scope>NUCLEOTIDE SEQUENCE [GENOMIC DNA]</scope>
    <scope>FUNCTION</scope>
    <scope>DISRUPTION PHENOTYPE</scope>
    <scope>INDUCTION</scope>
    <scope>PATHWAY</scope>
    <source>
        <strain>W106-1 / CGMCC3.15140</strain>
    </source>
</reference>
<reference key="2">
    <citation type="journal article" date="2015" name="BMC Genomics">
        <title>Genomic and transcriptomic analysis of the endophytic fungus Pestalotiopsis fici reveals its lifestyle and high potential for synthesis of natural products.</title>
        <authorList>
            <person name="Wang X."/>
            <person name="Zhang X."/>
            <person name="Liu L."/>
            <person name="Xiang M."/>
            <person name="Wang W."/>
            <person name="Sun X."/>
            <person name="Che Y."/>
            <person name="Guo L."/>
            <person name="Liu G."/>
            <person name="Guo L."/>
            <person name="Wang C."/>
            <person name="Yin W.B."/>
            <person name="Stadler M."/>
            <person name="Zhang X."/>
            <person name="Liu X."/>
        </authorList>
    </citation>
    <scope>NUCLEOTIDE SEQUENCE [LARGE SCALE GENOMIC DNA]</scope>
    <source>
        <strain>W106-1 / CGMCC3.15140</strain>
    </source>
</reference>
<evidence type="ECO:0000250" key="1">
    <source>
        <dbReference type="UniProtKB" id="Q5BEJ5"/>
    </source>
</evidence>
<evidence type="ECO:0000255" key="2"/>
<evidence type="ECO:0000255" key="3">
    <source>
        <dbReference type="PROSITE-ProRule" id="PRU00498"/>
    </source>
</evidence>
<evidence type="ECO:0000255" key="4">
    <source>
        <dbReference type="PROSITE-ProRule" id="PRU00718"/>
    </source>
</evidence>
<evidence type="ECO:0000269" key="5">
    <source>
    </source>
</evidence>
<evidence type="ECO:0000303" key="6">
    <source>
    </source>
</evidence>
<evidence type="ECO:0000305" key="7"/>
<evidence type="ECO:0000305" key="8">
    <source>
    </source>
</evidence>
<protein>
    <recommendedName>
        <fullName evidence="6">FAD-linked oxidoreductase iacH</fullName>
        <ecNumber evidence="8">1.-.-.-</ecNumber>
    </recommendedName>
    <alternativeName>
        <fullName evidence="6">Iso-A82775C biosynthesis cluster protein HK</fullName>
    </alternativeName>
</protein>
<comment type="function">
    <text evidence="5 8">FAD-linked oxidoreductase; part of the gene cluster that mediates the biosynthesis of iso-A82775C, a enylepoxycyclohexane and biosynthetic precursor of the chloropestolide anticancer natural products (PubMed:29384350). Within the cluster, the prenyltransferase iacE prenylates siccayne to generate pestalodiol E, using dimethylallyl diphosphate (DMAPP) as cosubstrate (PubMed:29384350). The probable oxidoreductase iacF is then involved in the epoxidation of pestalodiol F to pestalodiol F, which is further converted to pestalofone A by the short-chain dehydrogenase/reductase iacG (PubMed:29384350). Iso-A82775C is subsequently generated from pestalofone A by the short-chain dehydrogenase/reductase iacC (PubMed:29384350). Iso-A82775C is further condensed with maldoxin via a Diels-Alder reaction to produce the anticancer natural products chloropestolides A to E (Probable).</text>
</comment>
<comment type="cofactor">
    <cofactor evidence="1">
        <name>FAD</name>
        <dbReference type="ChEBI" id="CHEBI:57692"/>
    </cofactor>
</comment>
<comment type="pathway">
    <text evidence="8">Secondary metabolite biosynthesis.</text>
</comment>
<comment type="induction">
    <text evidence="5">Expression is co-regulated with the other genes from the iso-A82775C biosynthesis cluster and probably controlled by the cluster-specific transcription factors iacI and iacK.</text>
</comment>
<comment type="disruption phenotype">
    <text evidence="5">Does not affect the production of iso-A82775C.</text>
</comment>
<comment type="biotechnology">
    <text evidence="5">Iso-A82775C is a precursor for the biosynthesis of the anticancer natural products chloropestolides A to E via a Diesls-Alder reaction with maldoxin (PubMed:29384350). In the absence of the prenyltransferase iacE, siccayne accumulates instead of iso-A82775C and can also be condensed with maldoxin to produce chloropestolides H to K, which show also antibacterial and anticancer properties (PubMed:29384350).</text>
</comment>
<comment type="similarity">
    <text evidence="7">Belongs to the oxygen-dependent FAD-linked oxidoreductase family.</text>
</comment>
<organism>
    <name type="scientific">Pestalotiopsis fici (strain W106-1 / CGMCC3.15140)</name>
    <dbReference type="NCBI Taxonomy" id="1229662"/>
    <lineage>
        <taxon>Eukaryota</taxon>
        <taxon>Fungi</taxon>
        <taxon>Dikarya</taxon>
        <taxon>Ascomycota</taxon>
        <taxon>Pezizomycotina</taxon>
        <taxon>Sordariomycetes</taxon>
        <taxon>Xylariomycetidae</taxon>
        <taxon>Amphisphaeriales</taxon>
        <taxon>Sporocadaceae</taxon>
        <taxon>Pestalotiopsis</taxon>
    </lineage>
</organism>
<dbReference type="EC" id="1.-.-.-" evidence="8"/>
<dbReference type="EMBL" id="KU963195">
    <property type="protein sequence ID" value="APC93982.1"/>
    <property type="molecule type" value="Genomic_DNA"/>
</dbReference>
<dbReference type="EMBL" id="KI912110">
    <property type="protein sequence ID" value="ETS86020.1"/>
    <property type="molecule type" value="Genomic_DNA"/>
</dbReference>
<dbReference type="RefSeq" id="XP_007830817.1">
    <property type="nucleotide sequence ID" value="XM_007832626.1"/>
</dbReference>
<dbReference type="SMR" id="A0A1J0KJK5"/>
<dbReference type="GlyCosmos" id="A0A1J0KJK5">
    <property type="glycosylation" value="8 sites, No reported glycans"/>
</dbReference>
<dbReference type="GeneID" id="19269058"/>
<dbReference type="KEGG" id="pfy:PFICI_04045"/>
<dbReference type="eggNOG" id="ENOG502SJ3M">
    <property type="taxonomic scope" value="Eukaryota"/>
</dbReference>
<dbReference type="HOGENOM" id="CLU_018354_0_1_1"/>
<dbReference type="InParanoid" id="A0A1J0KJK5"/>
<dbReference type="OMA" id="FRFYVPI"/>
<dbReference type="OrthoDB" id="9996127at2759"/>
<dbReference type="Proteomes" id="UP000030651">
    <property type="component" value="Unassembled WGS sequence"/>
</dbReference>
<dbReference type="GO" id="GO:0071949">
    <property type="term" value="F:FAD binding"/>
    <property type="evidence" value="ECO:0007669"/>
    <property type="project" value="InterPro"/>
</dbReference>
<dbReference type="GO" id="GO:0016491">
    <property type="term" value="F:oxidoreductase activity"/>
    <property type="evidence" value="ECO:0007669"/>
    <property type="project" value="UniProtKB-KW"/>
</dbReference>
<dbReference type="Gene3D" id="3.30.465.10">
    <property type="match status" value="1"/>
</dbReference>
<dbReference type="Gene3D" id="3.40.462.20">
    <property type="match status" value="1"/>
</dbReference>
<dbReference type="InterPro" id="IPR012951">
    <property type="entry name" value="BBE"/>
</dbReference>
<dbReference type="InterPro" id="IPR016166">
    <property type="entry name" value="FAD-bd_PCMH"/>
</dbReference>
<dbReference type="InterPro" id="IPR036318">
    <property type="entry name" value="FAD-bd_PCMH-like_sf"/>
</dbReference>
<dbReference type="InterPro" id="IPR016169">
    <property type="entry name" value="FAD-bd_PCMH_sub2"/>
</dbReference>
<dbReference type="InterPro" id="IPR050416">
    <property type="entry name" value="FAD-linked_Oxidoreductase"/>
</dbReference>
<dbReference type="InterPro" id="IPR006094">
    <property type="entry name" value="Oxid_FAD_bind_N"/>
</dbReference>
<dbReference type="PANTHER" id="PTHR42973">
    <property type="entry name" value="BINDING OXIDOREDUCTASE, PUTATIVE (AFU_ORTHOLOGUE AFUA_1G17690)-RELATED"/>
    <property type="match status" value="1"/>
</dbReference>
<dbReference type="PANTHER" id="PTHR42973:SF8">
    <property type="entry name" value="FAD-BINDING PCMH-TYPE DOMAIN-CONTAINING PROTEIN"/>
    <property type="match status" value="1"/>
</dbReference>
<dbReference type="Pfam" id="PF08031">
    <property type="entry name" value="BBE"/>
    <property type="match status" value="1"/>
</dbReference>
<dbReference type="Pfam" id="PF01565">
    <property type="entry name" value="FAD_binding_4"/>
    <property type="match status" value="1"/>
</dbReference>
<dbReference type="SUPFAM" id="SSF56176">
    <property type="entry name" value="FAD-binding/transporter-associated domain-like"/>
    <property type="match status" value="1"/>
</dbReference>
<dbReference type="PROSITE" id="PS51387">
    <property type="entry name" value="FAD_PCMH"/>
    <property type="match status" value="1"/>
</dbReference>
<gene>
    <name evidence="6" type="primary">iacH</name>
    <name type="ORF">PFICI_04045</name>
</gene>
<name>IACH_PESFW</name>
<accession>A0A1J0KJK5</accession>
<accession>W3XJ25</accession>
<proteinExistence type="evidence at protein level"/>
<feature type="signal peptide" evidence="2">
    <location>
        <begin position="1"/>
        <end position="22"/>
    </location>
</feature>
<feature type="chain" id="PRO_5009613882" description="FAD-linked oxidoreductase iacH">
    <location>
        <begin position="23"/>
        <end position="512"/>
    </location>
</feature>
<feature type="domain" description="FAD-binding PCMH-type" evidence="4">
    <location>
        <begin position="77"/>
        <end position="248"/>
    </location>
</feature>
<feature type="glycosylation site" description="N-linked (GlcNAc...) asparagine" evidence="3">
    <location>
        <position position="39"/>
    </location>
</feature>
<feature type="glycosylation site" description="N-linked (GlcNAc...) asparagine" evidence="3">
    <location>
        <position position="55"/>
    </location>
</feature>
<feature type="glycosylation site" description="N-linked (GlcNAc...) asparagine" evidence="3">
    <location>
        <position position="69"/>
    </location>
</feature>
<feature type="glycosylation site" description="N-linked (GlcNAc...) asparagine" evidence="3">
    <location>
        <position position="210"/>
    </location>
</feature>
<feature type="glycosylation site" description="N-linked (GlcNAc...) asparagine" evidence="3">
    <location>
        <position position="217"/>
    </location>
</feature>
<feature type="glycosylation site" description="N-linked (GlcNAc...) asparagine" evidence="3">
    <location>
        <position position="278"/>
    </location>
</feature>
<feature type="glycosylation site" description="N-linked (GlcNAc...) asparagine" evidence="3">
    <location>
        <position position="295"/>
    </location>
</feature>
<feature type="glycosylation site" description="N-linked (GlcNAc...) asparagine" evidence="3">
    <location>
        <position position="367"/>
    </location>
</feature>